<protein>
    <recommendedName>
        <fullName evidence="4">Small ribosomal subunit protein uS13</fullName>
    </recommendedName>
    <alternativeName>
        <fullName>40S ribosomal protein S18</fullName>
    </alternativeName>
</protein>
<proteinExistence type="evidence at protein level"/>
<dbReference type="EMBL" id="AL590446">
    <property type="protein sequence ID" value="CAD25471.1"/>
    <property type="molecule type" value="Genomic_DNA"/>
</dbReference>
<dbReference type="RefSeq" id="NP_585867.1">
    <property type="nucleotide sequence ID" value="NM_001041489.1"/>
</dbReference>
<dbReference type="PDB" id="7QEP">
    <property type="method" value="EM"/>
    <property type="resolution" value="2.70 A"/>
    <property type="chains" value="C8=1-153"/>
</dbReference>
<dbReference type="PDBsum" id="7QEP"/>
<dbReference type="EMDB" id="EMD-13936"/>
<dbReference type="SMR" id="Q8SRP2"/>
<dbReference type="FunCoup" id="Q8SRP2">
    <property type="interactions" value="225"/>
</dbReference>
<dbReference type="STRING" id="284813.Q8SRP2"/>
<dbReference type="GeneID" id="859292"/>
<dbReference type="KEGG" id="ecu:ECU06_1110"/>
<dbReference type="VEuPathDB" id="MicrosporidiaDB:ECU06_1110"/>
<dbReference type="HOGENOM" id="CLU_103849_0_1_1"/>
<dbReference type="InParanoid" id="Q8SRP2"/>
<dbReference type="OMA" id="SYKGVRH"/>
<dbReference type="OrthoDB" id="1702480at2759"/>
<dbReference type="Proteomes" id="UP000000819">
    <property type="component" value="Chromosome VI"/>
</dbReference>
<dbReference type="GO" id="GO:0005829">
    <property type="term" value="C:cytosol"/>
    <property type="evidence" value="ECO:0007669"/>
    <property type="project" value="TreeGrafter"/>
</dbReference>
<dbReference type="GO" id="GO:0015935">
    <property type="term" value="C:small ribosomal subunit"/>
    <property type="evidence" value="ECO:0007669"/>
    <property type="project" value="TreeGrafter"/>
</dbReference>
<dbReference type="GO" id="GO:0019843">
    <property type="term" value="F:rRNA binding"/>
    <property type="evidence" value="ECO:0007669"/>
    <property type="project" value="UniProtKB-KW"/>
</dbReference>
<dbReference type="GO" id="GO:0003735">
    <property type="term" value="F:structural constituent of ribosome"/>
    <property type="evidence" value="ECO:0007669"/>
    <property type="project" value="InterPro"/>
</dbReference>
<dbReference type="GO" id="GO:0006412">
    <property type="term" value="P:translation"/>
    <property type="evidence" value="ECO:0007669"/>
    <property type="project" value="InterPro"/>
</dbReference>
<dbReference type="FunFam" id="1.10.8.50:FF:000001">
    <property type="entry name" value="30S ribosomal protein S13"/>
    <property type="match status" value="1"/>
</dbReference>
<dbReference type="Gene3D" id="1.10.8.50">
    <property type="match status" value="1"/>
</dbReference>
<dbReference type="Gene3D" id="4.10.910.10">
    <property type="entry name" value="30s ribosomal protein s13, domain 2"/>
    <property type="match status" value="1"/>
</dbReference>
<dbReference type="HAMAP" id="MF_01315">
    <property type="entry name" value="Ribosomal_uS13"/>
    <property type="match status" value="1"/>
</dbReference>
<dbReference type="InterPro" id="IPR027437">
    <property type="entry name" value="Rbsml_uS13_C"/>
</dbReference>
<dbReference type="InterPro" id="IPR001892">
    <property type="entry name" value="Ribosomal_uS13"/>
</dbReference>
<dbReference type="InterPro" id="IPR010979">
    <property type="entry name" value="Ribosomal_uS13-like_H2TH"/>
</dbReference>
<dbReference type="PANTHER" id="PTHR10871">
    <property type="entry name" value="30S RIBOSOMAL PROTEIN S13/40S RIBOSOMAL PROTEIN S18"/>
    <property type="match status" value="1"/>
</dbReference>
<dbReference type="PANTHER" id="PTHR10871:SF3">
    <property type="entry name" value="SMALL RIBOSOMAL SUBUNIT PROTEIN US13"/>
    <property type="match status" value="1"/>
</dbReference>
<dbReference type="Pfam" id="PF00416">
    <property type="entry name" value="Ribosomal_S13"/>
    <property type="match status" value="1"/>
</dbReference>
<dbReference type="PIRSF" id="PIRSF002134">
    <property type="entry name" value="Ribosomal_S13"/>
    <property type="match status" value="1"/>
</dbReference>
<dbReference type="SUPFAM" id="SSF46946">
    <property type="entry name" value="S13-like H2TH domain"/>
    <property type="match status" value="1"/>
</dbReference>
<dbReference type="PROSITE" id="PS50159">
    <property type="entry name" value="RIBOSOMAL_S13_2"/>
    <property type="match status" value="1"/>
</dbReference>
<accession>Q8SRP2</accession>
<sequence>MNYTYDPAEVQYIVRIHNTNIDGTKRIPFALTKIRGIGIRIATAICKRLGIDLRKRAGEMGEDEMKRISDAILDPASVGIPESYMNHQRDIIDGTTSHLIGTRLDADLRMMIERGKKNKRIRAYRLDVGLKVRGQRTKSNGRRGRSMGVSRKK</sequence>
<comment type="function">
    <text evidence="1">Located at the top of the head of the 40S subunit, it contacts several helices of the 18S rRNA.</text>
</comment>
<comment type="subcellular location">
    <subcellularLocation>
        <location>Cytoplasm</location>
    </subcellularLocation>
</comment>
<comment type="developmental stage">
    <text evidence="3">Expressed in late sporogonial stages.</text>
</comment>
<comment type="similarity">
    <text evidence="4">Belongs to the universal ribosomal protein uS13 family.</text>
</comment>
<name>RS18_ENCCU</name>
<reference key="1">
    <citation type="journal article" date="2001" name="Nature">
        <title>Genome sequence and gene compaction of the eukaryote parasite Encephalitozoon cuniculi.</title>
        <authorList>
            <person name="Katinka M.D."/>
            <person name="Duprat S."/>
            <person name="Cornillot E."/>
            <person name="Metenier G."/>
            <person name="Thomarat F."/>
            <person name="Prensier G."/>
            <person name="Barbe V."/>
            <person name="Peyretaillade E."/>
            <person name="Brottier P."/>
            <person name="Wincker P."/>
            <person name="Delbac F."/>
            <person name="El Alaoui H."/>
            <person name="Peyret P."/>
            <person name="Saurin W."/>
            <person name="Gouy M."/>
            <person name="Weissenbach J."/>
            <person name="Vivares C.P."/>
        </authorList>
    </citation>
    <scope>NUCLEOTIDE SEQUENCE [LARGE SCALE GENOMIC DNA]</scope>
    <source>
        <strain>GB-M1</strain>
    </source>
</reference>
<reference key="2">
    <citation type="journal article" date="2006" name="Proteomics">
        <title>Proteomic analysis of the eukaryotic parasite Encephalitozoon cuniculi (microsporidia): a reference map for proteins expressed in late sporogonial stages.</title>
        <authorList>
            <person name="Brosson D."/>
            <person name="Kuhn L."/>
            <person name="Delbac F."/>
            <person name="Garin J."/>
            <person name="Vivares C.P."/>
            <person name="Texier C."/>
        </authorList>
    </citation>
    <scope>IDENTIFICATION BY MASS SPECTROMETRY [LARGE SCALE ANALYSIS]</scope>
    <scope>DEVELOPMENTAL STAGE</scope>
</reference>
<evidence type="ECO:0000250" key="1"/>
<evidence type="ECO:0000256" key="2">
    <source>
        <dbReference type="SAM" id="MobiDB-lite"/>
    </source>
</evidence>
<evidence type="ECO:0000269" key="3">
    <source>
    </source>
</evidence>
<evidence type="ECO:0000305" key="4"/>
<keyword id="KW-0002">3D-structure</keyword>
<keyword id="KW-0963">Cytoplasm</keyword>
<keyword id="KW-1185">Reference proteome</keyword>
<keyword id="KW-0687">Ribonucleoprotein</keyword>
<keyword id="KW-0689">Ribosomal protein</keyword>
<keyword id="KW-0694">RNA-binding</keyword>
<keyword id="KW-0699">rRNA-binding</keyword>
<feature type="chain" id="PRO_0000132225" description="Small ribosomal subunit protein uS13">
    <location>
        <begin position="1"/>
        <end position="153"/>
    </location>
</feature>
<feature type="region of interest" description="Disordered" evidence="2">
    <location>
        <begin position="134"/>
        <end position="153"/>
    </location>
</feature>
<gene>
    <name type="primary">RPS18</name>
    <name type="ordered locus">ECU06_1110</name>
</gene>
<organism>
    <name type="scientific">Encephalitozoon cuniculi (strain GB-M1)</name>
    <name type="common">Microsporidian parasite</name>
    <dbReference type="NCBI Taxonomy" id="284813"/>
    <lineage>
        <taxon>Eukaryota</taxon>
        <taxon>Fungi</taxon>
        <taxon>Fungi incertae sedis</taxon>
        <taxon>Microsporidia</taxon>
        <taxon>Unikaryonidae</taxon>
        <taxon>Encephalitozoon</taxon>
    </lineage>
</organism>